<sequence length="645" mass="69696">MKNMSCKLVVSVTLFFSFLTIGPLAHAQNSSEKEVIVVYKNKAGKETILDSDADVEQQYKHLPAVAVTADQETVKELKQDPDILYVENNVSFTAADSTDFKVLSDGTDTSDNFEQWNLEPIQVKQAWKAGLTGKNIKIAVIDSGISPHDDLSIAGGYSAVSYTSSYKDDNGHGTHVAGIIGAKHNGYGIDGIAPEAQIYAVKALDQNGSGDLQSLLQGIDWSIANRMDIVNMSLGTTSDSKILHDAVNKAYEQGVLLVAASGNDGNGKPVNYPAAYSSVVAVSATNEKNQLASFSTTGDEVEFSAPGTNITSTYLNQYYATGSGTSQATPHAAAMFALLKQRDPAETNVQLREEMRKNIVDLGTAGRDQQFGYGLIQYKAQATDSAYAAAEQAVKKAEQTKAQIDINKARELISQLPNSDAKTALHKRLDKVQSYRNVKDAKDKVAKAEKYKTQQTVDTAQTAINKLPNGTDKKNLQKRLDQVKRYIASKQAKDKVAKAEKSKKKTDVDSAQSAIGKLPASSEKTSLQKRLNKVKSTNLKTAQQSVSAAEKKSTDANAAKAQSAVNQLQAGKDKTALQKRLDKVKKKVAAAEAKKVETAKAKVKKAEKDKTKKSKTSAQSAVNQLKASNEKTKLQKRLNAVKPKK</sequence>
<accession>P16396</accession>
<organism>
    <name type="scientific">Bacillus subtilis (strain 168)</name>
    <dbReference type="NCBI Taxonomy" id="224308"/>
    <lineage>
        <taxon>Bacteria</taxon>
        <taxon>Bacillati</taxon>
        <taxon>Bacillota</taxon>
        <taxon>Bacilli</taxon>
        <taxon>Bacillales</taxon>
        <taxon>Bacillaceae</taxon>
        <taxon>Bacillus</taxon>
    </lineage>
</organism>
<reference key="1">
    <citation type="journal article" date="1990" name="Mol. Gen. Genet.">
        <title>Multiple active forms of a novel serine protease from Bacillus subtilis.</title>
        <authorList>
            <person name="Brueckner R."/>
            <person name="Shoseyov O."/>
            <person name="Doi R.H."/>
        </authorList>
    </citation>
    <scope>NUCLEOTIDE SEQUENCE [GENOMIC DNA]</scope>
    <scope>PROTEIN SEQUENCE OF 107-113</scope>
    <scope>FUNCTION AS A PROTEASE</scope>
    <scope>ACTIVITY REGULATION</scope>
    <scope>SUBCELLULAR LOCATION</scope>
    <scope>DOMAIN</scope>
    <source>
        <strain>168 / DB204</strain>
    </source>
</reference>
<reference key="2">
    <citation type="journal article" date="1988" name="J. Bacteriol.">
        <title>Gene encoding a minor extracellular protease in Bacillus subtilis.</title>
        <authorList>
            <person name="Sloma A."/>
            <person name="Ally A."/>
            <person name="Ally D."/>
            <person name="Pero J."/>
        </authorList>
    </citation>
    <scope>NUCLEOTIDE SEQUENCE [GENOMIC DNA]</scope>
    <scope>FUNCTION AS A PROTEASE</scope>
    <scope>ACTIVITY REGULATION</scope>
    <scope>SUBCELLULAR LOCATION</scope>
    <scope>DOMAIN</scope>
</reference>
<reference key="3">
    <citation type="journal article" date="1993" name="Mol. Microbiol.">
        <title>Bacillus subtilis genome project: cloning and sequencing of the 97 kb region from 325 degrees to 333 degrees.</title>
        <authorList>
            <person name="Glaser P."/>
            <person name="Kunst F."/>
            <person name="Arnaud M."/>
            <person name="Coudart M.P."/>
            <person name="Gonzales W."/>
            <person name="Hullo M.-F."/>
            <person name="Ionescu M."/>
            <person name="Lubochinsky B."/>
            <person name="Marcelino L."/>
            <person name="Moszer I."/>
            <person name="Presecan E."/>
            <person name="Santana M."/>
            <person name="Schneider E."/>
            <person name="Schweizer J."/>
            <person name="Vertes A."/>
            <person name="Rapoport G."/>
            <person name="Danchin A."/>
        </authorList>
    </citation>
    <scope>NUCLEOTIDE SEQUENCE [GENOMIC DNA]</scope>
    <source>
        <strain>168</strain>
    </source>
</reference>
<reference key="4">
    <citation type="journal article" date="1997" name="Nature">
        <title>The complete genome sequence of the Gram-positive bacterium Bacillus subtilis.</title>
        <authorList>
            <person name="Kunst F."/>
            <person name="Ogasawara N."/>
            <person name="Moszer I."/>
            <person name="Albertini A.M."/>
            <person name="Alloni G."/>
            <person name="Azevedo V."/>
            <person name="Bertero M.G."/>
            <person name="Bessieres P."/>
            <person name="Bolotin A."/>
            <person name="Borchert S."/>
            <person name="Borriss R."/>
            <person name="Boursier L."/>
            <person name="Brans A."/>
            <person name="Braun M."/>
            <person name="Brignell S.C."/>
            <person name="Bron S."/>
            <person name="Brouillet S."/>
            <person name="Bruschi C.V."/>
            <person name="Caldwell B."/>
            <person name="Capuano V."/>
            <person name="Carter N.M."/>
            <person name="Choi S.-K."/>
            <person name="Codani J.-J."/>
            <person name="Connerton I.F."/>
            <person name="Cummings N.J."/>
            <person name="Daniel R.A."/>
            <person name="Denizot F."/>
            <person name="Devine K.M."/>
            <person name="Duesterhoeft A."/>
            <person name="Ehrlich S.D."/>
            <person name="Emmerson P.T."/>
            <person name="Entian K.-D."/>
            <person name="Errington J."/>
            <person name="Fabret C."/>
            <person name="Ferrari E."/>
            <person name="Foulger D."/>
            <person name="Fritz C."/>
            <person name="Fujita M."/>
            <person name="Fujita Y."/>
            <person name="Fuma S."/>
            <person name="Galizzi A."/>
            <person name="Galleron N."/>
            <person name="Ghim S.-Y."/>
            <person name="Glaser P."/>
            <person name="Goffeau A."/>
            <person name="Golightly E.J."/>
            <person name="Grandi G."/>
            <person name="Guiseppi G."/>
            <person name="Guy B.J."/>
            <person name="Haga K."/>
            <person name="Haiech J."/>
            <person name="Harwood C.R."/>
            <person name="Henaut A."/>
            <person name="Hilbert H."/>
            <person name="Holsappel S."/>
            <person name="Hosono S."/>
            <person name="Hullo M.-F."/>
            <person name="Itaya M."/>
            <person name="Jones L.-M."/>
            <person name="Joris B."/>
            <person name="Karamata D."/>
            <person name="Kasahara Y."/>
            <person name="Klaerr-Blanchard M."/>
            <person name="Klein C."/>
            <person name="Kobayashi Y."/>
            <person name="Koetter P."/>
            <person name="Koningstein G."/>
            <person name="Krogh S."/>
            <person name="Kumano M."/>
            <person name="Kurita K."/>
            <person name="Lapidus A."/>
            <person name="Lardinois S."/>
            <person name="Lauber J."/>
            <person name="Lazarevic V."/>
            <person name="Lee S.-M."/>
            <person name="Levine A."/>
            <person name="Liu H."/>
            <person name="Masuda S."/>
            <person name="Mauel C."/>
            <person name="Medigue C."/>
            <person name="Medina N."/>
            <person name="Mellado R.P."/>
            <person name="Mizuno M."/>
            <person name="Moestl D."/>
            <person name="Nakai S."/>
            <person name="Noback M."/>
            <person name="Noone D."/>
            <person name="O'Reilly M."/>
            <person name="Ogawa K."/>
            <person name="Ogiwara A."/>
            <person name="Oudega B."/>
            <person name="Park S.-H."/>
            <person name="Parro V."/>
            <person name="Pohl T.M."/>
            <person name="Portetelle D."/>
            <person name="Porwollik S."/>
            <person name="Prescott A.M."/>
            <person name="Presecan E."/>
            <person name="Pujic P."/>
            <person name="Purnelle B."/>
            <person name="Rapoport G."/>
            <person name="Rey M."/>
            <person name="Reynolds S."/>
            <person name="Rieger M."/>
            <person name="Rivolta C."/>
            <person name="Rocha E."/>
            <person name="Roche B."/>
            <person name="Rose M."/>
            <person name="Sadaie Y."/>
            <person name="Sato T."/>
            <person name="Scanlan E."/>
            <person name="Schleich S."/>
            <person name="Schroeter R."/>
            <person name="Scoffone F."/>
            <person name="Sekiguchi J."/>
            <person name="Sekowska A."/>
            <person name="Seror S.J."/>
            <person name="Serror P."/>
            <person name="Shin B.-S."/>
            <person name="Soldo B."/>
            <person name="Sorokin A."/>
            <person name="Tacconi E."/>
            <person name="Takagi T."/>
            <person name="Takahashi H."/>
            <person name="Takemaru K."/>
            <person name="Takeuchi M."/>
            <person name="Tamakoshi A."/>
            <person name="Tanaka T."/>
            <person name="Terpstra P."/>
            <person name="Tognoni A."/>
            <person name="Tosato V."/>
            <person name="Uchiyama S."/>
            <person name="Vandenbol M."/>
            <person name="Vannier F."/>
            <person name="Vassarotti A."/>
            <person name="Viari A."/>
            <person name="Wambutt R."/>
            <person name="Wedler E."/>
            <person name="Wedler H."/>
            <person name="Weitzenegger T."/>
            <person name="Winters P."/>
            <person name="Wipat A."/>
            <person name="Yamamoto H."/>
            <person name="Yamane K."/>
            <person name="Yasumoto K."/>
            <person name="Yata K."/>
            <person name="Yoshida K."/>
            <person name="Yoshikawa H.-F."/>
            <person name="Zumstein E."/>
            <person name="Yoshikawa H."/>
            <person name="Danchin A."/>
        </authorList>
    </citation>
    <scope>NUCLEOTIDE SEQUENCE [LARGE SCALE GENOMIC DNA]</scope>
    <source>
        <strain>168</strain>
    </source>
</reference>
<reference key="5">
    <citation type="journal article" date="2002" name="J. Bacteriol.">
        <title>Epr is transcribed from a final sigma(D) promoter and is involved in swarming of Bacillus subtilis.</title>
        <authorList>
            <person name="Dixit M."/>
            <person name="Murudkar C.S."/>
            <person name="Rao K.K."/>
        </authorList>
    </citation>
    <scope>FUNCTION IN SWARMING</scope>
    <scope>INDUCTION</scope>
    <scope>DISRUPTION PHENOTYPE</scope>
    <source>
        <strain>168</strain>
    </source>
</reference>
<reference key="6">
    <citation type="journal article" date="2006" name="FEMS Microbiol. Lett.">
        <title>The carboxy terminal domain of Epr, a minor extracellular serine protease, is essential for the swarming motility of Bacillus subtilis 168.</title>
        <authorList>
            <person name="Murudkar C.S."/>
            <person name="Kodgire P."/>
            <person name="Krishnamurthy Rao K."/>
        </authorList>
    </citation>
    <scope>FUNCTION</scope>
    <scope>SUBCELLULAR LOCATION</scope>
    <scope>DOMAIN</scope>
    <scope>PROCESSING</scope>
    <scope>MUTAGENESIS OF ASP-142; HIS-172 AND SER-326</scope>
    <source>
        <strain>168</strain>
    </source>
</reference>
<reference key="7">
    <citation type="journal article" date="2006" name="J. Bacteriol.">
        <title>ScoC and SinR negatively regulate epr by corepression in Bacillus subtilis.</title>
        <authorList>
            <person name="Kodgire P."/>
            <person name="Dixit M."/>
            <person name="Rao K.K."/>
        </authorList>
    </citation>
    <scope>TRANSCRIPTIONAL REGULATION BY HPR AND SINR</scope>
    <source>
        <strain>168</strain>
    </source>
</reference>
<reference key="8">
    <citation type="journal article" date="2007" name="Mol. Microbiol.">
        <title>Identification of subtilisin, Epr and Vpr as enzymes that produce CSF, an extracellular signalling peptide of Bacillus subtilis.</title>
        <authorList>
            <person name="Lanigan-Gerdes S."/>
            <person name="Dooley A.N."/>
            <person name="Faull K.F."/>
            <person name="Lazazzera B.A."/>
        </authorList>
    </citation>
    <scope>FUNCTION</scope>
    <scope>SUBCELLULAR LOCATION</scope>
    <scope>DISRUPTION PHENOTYPE</scope>
</reference>
<reference key="9">
    <citation type="journal article" date="2009" name="FEMS Microbiol. Lett.">
        <title>Epr plays a key role in DegU-mediated swarming motility of Bacillus subtilis.</title>
        <authorList>
            <person name="Gupta M."/>
            <person name="Rao K.K."/>
        </authorList>
    </citation>
    <scope>FUNCTION</scope>
    <scope>INDUCTION</scope>
    <scope>DISRUPTION PHENOTYPE</scope>
    <source>
        <strain>168 / Marburg / ATCC 6051 / DSM 10 / JCM 1465 / NBRC 13719 / NCIMB 3610 / NRRL NRS-744 / VKM B-501</strain>
    </source>
</reference>
<reference key="10">
    <citation type="journal article" date="2013" name="J. Biosci.">
        <title>Spo0A positively regulates epr expression by negating the repressive effect of co-repressors, SinR and ScoC, in Bacillus subtilis.</title>
        <authorList>
            <person name="Gupta M."/>
            <person name="Dixit M."/>
            <person name="Rao K.K."/>
        </authorList>
    </citation>
    <scope>TRANSCRIPTIONAL REGULATION BY SPO0A</scope>
    <source>
        <strain>168</strain>
    </source>
</reference>
<comment type="function">
    <text evidence="4 5 7 8 9 11">Serine protease (PubMed:17666034, PubMed:2116590, PubMed:3142851). Involved in the production of the competence and sporulation stimulating factor CSF (PubMed:17666034). In addition, is essential for swarming motility (PubMed:11751842, PubMed:16553828, PubMed:19416356). Plays a key role in DegU-mediated swarming motility (PubMed:19416356). The protease activity is dispensable for swarming (PubMed:16553828). Not essential for growth or sporulation (PubMed:3142851).</text>
</comment>
<comment type="activity regulation">
    <text evidence="9 11">Requires Ca(2+) for stability (PubMed:2116590). Activity is inhibited by phenylmethylsulfonyl fluoride (PMSF) and EDTA (PubMed:2116590, PubMed:3142851).</text>
</comment>
<comment type="subcellular location">
    <subcellularLocation>
        <location evidence="5 9 11">Secreted</location>
    </subcellularLocation>
    <subcellularLocation>
        <location evidence="7">Secreted</location>
        <location evidence="7">Cell wall</location>
    </subcellularLocation>
    <text evidence="5">Secretion is crucial for the swarming motility.</text>
</comment>
<comment type="induction">
    <text evidence="4 6 8 10">Expression is sigma D-dependent (PubMed:11751842). Expression is positively regulated by DegU, and very low levels of DegU-P are required for epr maximal expression (PubMed:19416356). Negatively regulated jointly by ScoC (Hpr) and SinR, which bind to their respective target sites 62 bp apart (PubMed:16923912). Spo0A positively regulates epr expression by negating the repressive effect of corepressors, SinR and ScoC (Hpr) (PubMed:23660663). Spo0A binds to the upstream region of epr promoter and in turn occludes the binding site of one of the corepressor, SinR (PubMed:23660663).</text>
</comment>
<comment type="domain">
    <text evidence="5 9 11">Contains two domains, a large N-terminal domain encoding a serine protease homologous to subtilisin and a smaller C-terminal domain that possesses unusual sequence features (PubMed:16553828, PubMed:2116590, PubMed:3142851). The C-terminal third of the protein is not required for protease activity but is required for swarming (PubMed:16553828, PubMed:2116590, PubMed:3142851).</text>
</comment>
<comment type="PTM">
    <text evidence="5 9">May undergo two steps of processing in its passage through the cell membrane: removal of the N-terminal signal sequence and cleavage of the C-terminal domain (PubMed:16553828). Several active forms of Epr with molecular masses between 40 and 34 kDa were found in the medium of B.subtilis cultures (PubMed:2116590). The size variation of the active forms expressed by the complete epr gene appears to be the result of partial removal of the C-terminus either by processing or degradation (PubMed:2116590).</text>
</comment>
<comment type="disruption phenotype">
    <text evidence="4 7 8">Disruption of the gene abolishes swarming (PubMed:11751842, PubMed:19416356). Mutant lacking this gene does not show significant decrease in CSF production, but the triple deletion mutant aprE-epr-vpr is defective in the cleavage event to release mature CSF (PubMed:17666034).</text>
</comment>
<comment type="similarity">
    <text evidence="13">Belongs to the peptidase S8 family.</text>
</comment>
<gene>
    <name evidence="12" type="primary">epr</name>
    <name type="ordered locus">BSU38400</name>
    <name type="ORF">ipa-15r</name>
</gene>
<name>SUBE_BACSU</name>
<proteinExistence type="evidence at protein level"/>
<evidence type="ECO:0000255" key="1"/>
<evidence type="ECO:0000255" key="2">
    <source>
        <dbReference type="PROSITE-ProRule" id="PRU01240"/>
    </source>
</evidence>
<evidence type="ECO:0000256" key="3">
    <source>
        <dbReference type="SAM" id="MobiDB-lite"/>
    </source>
</evidence>
<evidence type="ECO:0000269" key="4">
    <source>
    </source>
</evidence>
<evidence type="ECO:0000269" key="5">
    <source>
    </source>
</evidence>
<evidence type="ECO:0000269" key="6">
    <source>
    </source>
</evidence>
<evidence type="ECO:0000269" key="7">
    <source>
    </source>
</evidence>
<evidence type="ECO:0000269" key="8">
    <source>
    </source>
</evidence>
<evidence type="ECO:0000269" key="9">
    <source>
    </source>
</evidence>
<evidence type="ECO:0000269" key="10">
    <source>
    </source>
</evidence>
<evidence type="ECO:0000269" key="11">
    <source>
    </source>
</evidence>
<evidence type="ECO:0000303" key="12">
    <source>
    </source>
</evidence>
<evidence type="ECO:0000305" key="13"/>
<evidence type="ECO:0000305" key="14">
    <source>
    </source>
</evidence>
<dbReference type="EC" id="3.4.21.-" evidence="7 9 11"/>
<dbReference type="EMBL" id="X53307">
    <property type="protein sequence ID" value="CAA37392.1"/>
    <property type="molecule type" value="Genomic_DNA"/>
</dbReference>
<dbReference type="EMBL" id="M22407">
    <property type="protein sequence ID" value="AAA22423.1"/>
    <property type="molecule type" value="Genomic_DNA"/>
</dbReference>
<dbReference type="EMBL" id="X73124">
    <property type="protein sequence ID" value="CAA51571.1"/>
    <property type="molecule type" value="Genomic_DNA"/>
</dbReference>
<dbReference type="EMBL" id="AL009126">
    <property type="protein sequence ID" value="CAB15866.1"/>
    <property type="molecule type" value="Genomic_DNA"/>
</dbReference>
<dbReference type="PIR" id="S11504">
    <property type="entry name" value="SUBSMP"/>
</dbReference>
<dbReference type="RefSeq" id="NP_391719.1">
    <property type="nucleotide sequence ID" value="NC_000964.3"/>
</dbReference>
<dbReference type="RefSeq" id="WP_003243950.1">
    <property type="nucleotide sequence ID" value="NZ_OZ025638.1"/>
</dbReference>
<dbReference type="SMR" id="P16396"/>
<dbReference type="FunCoup" id="P16396">
    <property type="interactions" value="267"/>
</dbReference>
<dbReference type="STRING" id="224308.BSU38400"/>
<dbReference type="MEROPS" id="S08.126"/>
<dbReference type="PaxDb" id="224308-BSU38400"/>
<dbReference type="EnsemblBacteria" id="CAB15866">
    <property type="protein sequence ID" value="CAB15866"/>
    <property type="gene ID" value="BSU_38400"/>
</dbReference>
<dbReference type="GeneID" id="937332"/>
<dbReference type="KEGG" id="bsu:BSU38400"/>
<dbReference type="PATRIC" id="fig|224308.179.peg.4157"/>
<dbReference type="eggNOG" id="COG1404">
    <property type="taxonomic scope" value="Bacteria"/>
</dbReference>
<dbReference type="InParanoid" id="P16396"/>
<dbReference type="OrthoDB" id="9798386at2"/>
<dbReference type="PhylomeDB" id="P16396"/>
<dbReference type="BioCyc" id="BSUB:BSU38400-MONOMER"/>
<dbReference type="Proteomes" id="UP000001570">
    <property type="component" value="Chromosome"/>
</dbReference>
<dbReference type="GO" id="GO:0005576">
    <property type="term" value="C:extracellular region"/>
    <property type="evidence" value="ECO:0007669"/>
    <property type="project" value="UniProtKB-SubCell"/>
</dbReference>
<dbReference type="GO" id="GO:0004252">
    <property type="term" value="F:serine-type endopeptidase activity"/>
    <property type="evidence" value="ECO:0007669"/>
    <property type="project" value="InterPro"/>
</dbReference>
<dbReference type="GO" id="GO:0006508">
    <property type="term" value="P:proteolysis"/>
    <property type="evidence" value="ECO:0007669"/>
    <property type="project" value="UniProtKB-KW"/>
</dbReference>
<dbReference type="CDD" id="cd07477">
    <property type="entry name" value="Peptidases_S8_Subtilisin_subset"/>
    <property type="match status" value="1"/>
</dbReference>
<dbReference type="Gene3D" id="3.30.70.80">
    <property type="entry name" value="Peptidase S8 propeptide/proteinase inhibitor I9"/>
    <property type="match status" value="1"/>
</dbReference>
<dbReference type="Gene3D" id="3.40.50.200">
    <property type="entry name" value="Peptidase S8/S53 domain"/>
    <property type="match status" value="1"/>
</dbReference>
<dbReference type="Gene3D" id="1.10.10.1270">
    <property type="entry name" value="Sbi, C3 binding domain IV"/>
    <property type="match status" value="4"/>
</dbReference>
<dbReference type="InterPro" id="IPR054725">
    <property type="entry name" value="Epr_GA-like"/>
</dbReference>
<dbReference type="InterPro" id="IPR000209">
    <property type="entry name" value="Peptidase_S8/S53_dom"/>
</dbReference>
<dbReference type="InterPro" id="IPR036852">
    <property type="entry name" value="Peptidase_S8/S53_dom_sf"/>
</dbReference>
<dbReference type="InterPro" id="IPR051048">
    <property type="entry name" value="Peptidase_S8/S53_subtilisin"/>
</dbReference>
<dbReference type="InterPro" id="IPR023827">
    <property type="entry name" value="Peptidase_S8_Asp-AS"/>
</dbReference>
<dbReference type="InterPro" id="IPR022398">
    <property type="entry name" value="Peptidase_S8_His-AS"/>
</dbReference>
<dbReference type="InterPro" id="IPR023828">
    <property type="entry name" value="Peptidase_S8_Ser-AS"/>
</dbReference>
<dbReference type="InterPro" id="IPR015500">
    <property type="entry name" value="Peptidase_S8_subtilisin-rel"/>
</dbReference>
<dbReference type="InterPro" id="IPR037045">
    <property type="entry name" value="S8pro/Inhibitor_I9_sf"/>
</dbReference>
<dbReference type="InterPro" id="IPR041909">
    <property type="entry name" value="Sbi_C3_db_domIV"/>
</dbReference>
<dbReference type="InterPro" id="IPR034202">
    <property type="entry name" value="Subtilisin_Carlsberg-like"/>
</dbReference>
<dbReference type="PANTHER" id="PTHR43399:SF4">
    <property type="entry name" value="CELL WALL-ASSOCIATED PROTEASE"/>
    <property type="match status" value="1"/>
</dbReference>
<dbReference type="PANTHER" id="PTHR43399">
    <property type="entry name" value="SUBTILISIN-RELATED"/>
    <property type="match status" value="1"/>
</dbReference>
<dbReference type="Pfam" id="PF22775">
    <property type="entry name" value="GA_3"/>
    <property type="match status" value="3"/>
</dbReference>
<dbReference type="Pfam" id="PF00082">
    <property type="entry name" value="Peptidase_S8"/>
    <property type="match status" value="1"/>
</dbReference>
<dbReference type="PRINTS" id="PR00723">
    <property type="entry name" value="SUBTILISIN"/>
</dbReference>
<dbReference type="SUPFAM" id="SSF54897">
    <property type="entry name" value="Protease propeptides/inhibitors"/>
    <property type="match status" value="1"/>
</dbReference>
<dbReference type="SUPFAM" id="SSF52743">
    <property type="entry name" value="Subtilisin-like"/>
    <property type="match status" value="1"/>
</dbReference>
<dbReference type="PROSITE" id="PS51892">
    <property type="entry name" value="SUBTILASE"/>
    <property type="match status" value="1"/>
</dbReference>
<dbReference type="PROSITE" id="PS00136">
    <property type="entry name" value="SUBTILASE_ASP"/>
    <property type="match status" value="1"/>
</dbReference>
<dbReference type="PROSITE" id="PS00137">
    <property type="entry name" value="SUBTILASE_HIS"/>
    <property type="match status" value="1"/>
</dbReference>
<dbReference type="PROSITE" id="PS00138">
    <property type="entry name" value="SUBTILASE_SER"/>
    <property type="match status" value="1"/>
</dbReference>
<protein>
    <recommendedName>
        <fullName evidence="13">Minor extracellular protease Epr</fullName>
        <ecNumber evidence="7 9 11">3.4.21.-</ecNumber>
    </recommendedName>
</protein>
<keyword id="KW-0134">Cell wall</keyword>
<keyword id="KW-0903">Direct protein sequencing</keyword>
<keyword id="KW-0378">Hydrolase</keyword>
<keyword id="KW-0645">Protease</keyword>
<keyword id="KW-1185">Reference proteome</keyword>
<keyword id="KW-0964">Secreted</keyword>
<keyword id="KW-0720">Serine protease</keyword>
<keyword id="KW-0732">Signal</keyword>
<keyword id="KW-0865">Zymogen</keyword>
<feature type="signal peptide" evidence="1">
    <location>
        <begin position="1"/>
        <end position="27"/>
    </location>
</feature>
<feature type="propeptide" id="PRO_0000027170" evidence="14">
    <location>
        <begin position="28"/>
        <end position="103"/>
    </location>
</feature>
<feature type="chain" id="PRO_0000027171" description="Minor extracellular protease Epr" evidence="14">
    <location>
        <begin position="104"/>
        <end position="645"/>
    </location>
</feature>
<feature type="domain" description="Peptidase S8" evidence="2">
    <location>
        <begin position="115"/>
        <end position="382"/>
    </location>
</feature>
<feature type="region of interest" description="Disordered" evidence="3">
    <location>
        <begin position="490"/>
        <end position="577"/>
    </location>
</feature>
<feature type="region of interest" description="Disordered" evidence="3">
    <location>
        <begin position="591"/>
        <end position="645"/>
    </location>
</feature>
<feature type="compositionally biased region" description="Basic and acidic residues" evidence="3">
    <location>
        <begin position="491"/>
        <end position="508"/>
    </location>
</feature>
<feature type="compositionally biased region" description="Polar residues" evidence="3">
    <location>
        <begin position="522"/>
        <end position="547"/>
    </location>
</feature>
<feature type="compositionally biased region" description="Basic and acidic residues" evidence="3">
    <location>
        <begin position="592"/>
        <end position="610"/>
    </location>
</feature>
<feature type="active site" description="Charge relay system" evidence="2">
    <location>
        <position position="142"/>
    </location>
</feature>
<feature type="active site" description="Charge relay system" evidence="2">
    <location>
        <position position="172"/>
    </location>
</feature>
<feature type="active site" description="Charge relay system" evidence="2">
    <location>
        <position position="326"/>
    </location>
</feature>
<feature type="mutagenesis site" description="Loss of protease activity, but mutant is still able to swarm." evidence="7">
    <original>D</original>
    <variation>A</variation>
    <location>
        <position position="142"/>
    </location>
</feature>
<feature type="mutagenesis site" description="Loss of protease activity, but mutant is still able to swarm." evidence="7">
    <original>H</original>
    <variation>A</variation>
    <location>
        <position position="172"/>
    </location>
</feature>
<feature type="mutagenesis site" description="Loss of protease activity, but mutant is still able to swarm." evidence="7">
    <original>S</original>
    <variation>A</variation>
    <location>
        <position position="326"/>
    </location>
</feature>